<protein>
    <recommendedName>
        <fullName evidence="1">dCTP deaminase</fullName>
        <ecNumber evidence="1">3.5.4.13</ecNumber>
    </recommendedName>
    <alternativeName>
        <fullName evidence="1">Deoxycytidine triphosphate deaminase</fullName>
    </alternativeName>
</protein>
<evidence type="ECO:0000255" key="1">
    <source>
        <dbReference type="HAMAP-Rule" id="MF_00146"/>
    </source>
</evidence>
<evidence type="ECO:0000256" key="2">
    <source>
        <dbReference type="SAM" id="MobiDB-lite"/>
    </source>
</evidence>
<gene>
    <name evidence="1" type="primary">dcd</name>
    <name type="ordered locus">Shewmr4_1658</name>
</gene>
<sequence>MRLTDIEIEQALDNGSIVIEPRPSNDAISGVSVDVRLGGQFRVFKDHTAPFIDLSGPSTEVQAALDRVMSEIIEIPDGEAFFLHPGELALAVTYESVTLPADIVGWLDGRSSLARLGLMVHVTAHRIDPGWQGKIVLEFYNSGKLPLALRPRMTIGALNFERLSGPVARPYNKRKNAKYKDQQDAVASRISQD</sequence>
<dbReference type="EC" id="3.5.4.13" evidence="1"/>
<dbReference type="EMBL" id="CP000446">
    <property type="protein sequence ID" value="ABI38734.1"/>
    <property type="molecule type" value="Genomic_DNA"/>
</dbReference>
<dbReference type="RefSeq" id="WP_011622434.1">
    <property type="nucleotide sequence ID" value="NC_008321.1"/>
</dbReference>
<dbReference type="SMR" id="Q0HJN3"/>
<dbReference type="GeneID" id="94727754"/>
<dbReference type="KEGG" id="she:Shewmr4_1658"/>
<dbReference type="HOGENOM" id="CLU_087476_2_0_6"/>
<dbReference type="UniPathway" id="UPA00610">
    <property type="reaction ID" value="UER00665"/>
</dbReference>
<dbReference type="GO" id="GO:0008829">
    <property type="term" value="F:dCTP deaminase activity"/>
    <property type="evidence" value="ECO:0007669"/>
    <property type="project" value="UniProtKB-UniRule"/>
</dbReference>
<dbReference type="GO" id="GO:0000166">
    <property type="term" value="F:nucleotide binding"/>
    <property type="evidence" value="ECO:0007669"/>
    <property type="project" value="UniProtKB-KW"/>
</dbReference>
<dbReference type="GO" id="GO:0006226">
    <property type="term" value="P:dUMP biosynthetic process"/>
    <property type="evidence" value="ECO:0007669"/>
    <property type="project" value="UniProtKB-UniPathway"/>
</dbReference>
<dbReference type="GO" id="GO:0006229">
    <property type="term" value="P:dUTP biosynthetic process"/>
    <property type="evidence" value="ECO:0007669"/>
    <property type="project" value="UniProtKB-UniRule"/>
</dbReference>
<dbReference type="GO" id="GO:0015949">
    <property type="term" value="P:nucleobase-containing small molecule interconversion"/>
    <property type="evidence" value="ECO:0007669"/>
    <property type="project" value="TreeGrafter"/>
</dbReference>
<dbReference type="CDD" id="cd07557">
    <property type="entry name" value="trimeric_dUTPase"/>
    <property type="match status" value="1"/>
</dbReference>
<dbReference type="FunFam" id="2.70.40.10:FF:000003">
    <property type="entry name" value="dCTP deaminase"/>
    <property type="match status" value="1"/>
</dbReference>
<dbReference type="Gene3D" id="2.70.40.10">
    <property type="match status" value="1"/>
</dbReference>
<dbReference type="HAMAP" id="MF_00146">
    <property type="entry name" value="dCTP_deaminase"/>
    <property type="match status" value="1"/>
</dbReference>
<dbReference type="InterPro" id="IPR011962">
    <property type="entry name" value="dCTP_deaminase"/>
</dbReference>
<dbReference type="InterPro" id="IPR036157">
    <property type="entry name" value="dUTPase-like_sf"/>
</dbReference>
<dbReference type="InterPro" id="IPR033704">
    <property type="entry name" value="dUTPase_trimeric"/>
</dbReference>
<dbReference type="NCBIfam" id="TIGR02274">
    <property type="entry name" value="dCTP_deam"/>
    <property type="match status" value="1"/>
</dbReference>
<dbReference type="PANTHER" id="PTHR42680">
    <property type="entry name" value="DCTP DEAMINASE"/>
    <property type="match status" value="1"/>
</dbReference>
<dbReference type="PANTHER" id="PTHR42680:SF3">
    <property type="entry name" value="DCTP DEAMINASE"/>
    <property type="match status" value="1"/>
</dbReference>
<dbReference type="Pfam" id="PF22769">
    <property type="entry name" value="DCD"/>
    <property type="match status" value="1"/>
</dbReference>
<dbReference type="SUPFAM" id="SSF51283">
    <property type="entry name" value="dUTPase-like"/>
    <property type="match status" value="1"/>
</dbReference>
<accession>Q0HJN3</accession>
<name>DCD_SHESM</name>
<keyword id="KW-0378">Hydrolase</keyword>
<keyword id="KW-0546">Nucleotide metabolism</keyword>
<keyword id="KW-0547">Nucleotide-binding</keyword>
<reference key="1">
    <citation type="submission" date="2006-08" db="EMBL/GenBank/DDBJ databases">
        <title>Complete sequence of Shewanella sp. MR-4.</title>
        <authorList>
            <consortium name="US DOE Joint Genome Institute"/>
            <person name="Copeland A."/>
            <person name="Lucas S."/>
            <person name="Lapidus A."/>
            <person name="Barry K."/>
            <person name="Detter J.C."/>
            <person name="Glavina del Rio T."/>
            <person name="Hammon N."/>
            <person name="Israni S."/>
            <person name="Dalin E."/>
            <person name="Tice H."/>
            <person name="Pitluck S."/>
            <person name="Kiss H."/>
            <person name="Brettin T."/>
            <person name="Bruce D."/>
            <person name="Han C."/>
            <person name="Tapia R."/>
            <person name="Gilna P."/>
            <person name="Schmutz J."/>
            <person name="Larimer F."/>
            <person name="Land M."/>
            <person name="Hauser L."/>
            <person name="Kyrpides N."/>
            <person name="Mikhailova N."/>
            <person name="Nealson K."/>
            <person name="Konstantinidis K."/>
            <person name="Klappenbach J."/>
            <person name="Tiedje J."/>
            <person name="Richardson P."/>
        </authorList>
    </citation>
    <scope>NUCLEOTIDE SEQUENCE [LARGE SCALE GENOMIC DNA]</scope>
    <source>
        <strain>MR-4</strain>
    </source>
</reference>
<proteinExistence type="inferred from homology"/>
<comment type="function">
    <text evidence="1">Catalyzes the deamination of dCTP to dUTP.</text>
</comment>
<comment type="catalytic activity">
    <reaction evidence="1">
        <text>dCTP + H2O + H(+) = dUTP + NH4(+)</text>
        <dbReference type="Rhea" id="RHEA:22680"/>
        <dbReference type="ChEBI" id="CHEBI:15377"/>
        <dbReference type="ChEBI" id="CHEBI:15378"/>
        <dbReference type="ChEBI" id="CHEBI:28938"/>
        <dbReference type="ChEBI" id="CHEBI:61481"/>
        <dbReference type="ChEBI" id="CHEBI:61555"/>
        <dbReference type="EC" id="3.5.4.13"/>
    </reaction>
</comment>
<comment type="pathway">
    <text evidence="1">Pyrimidine metabolism; dUMP biosynthesis; dUMP from dCTP (dUTP route): step 1/2.</text>
</comment>
<comment type="subunit">
    <text evidence="1">Homotrimer.</text>
</comment>
<comment type="similarity">
    <text evidence="1">Belongs to the dCTP deaminase family.</text>
</comment>
<feature type="chain" id="PRO_1000009813" description="dCTP deaminase">
    <location>
        <begin position="1"/>
        <end position="193"/>
    </location>
</feature>
<feature type="region of interest" description="Disordered" evidence="2">
    <location>
        <begin position="173"/>
        <end position="193"/>
    </location>
</feature>
<feature type="active site" description="Proton donor/acceptor" evidence="1">
    <location>
        <position position="138"/>
    </location>
</feature>
<feature type="binding site" evidence="1">
    <location>
        <begin position="110"/>
        <end position="115"/>
    </location>
    <ligand>
        <name>dCTP</name>
        <dbReference type="ChEBI" id="CHEBI:61481"/>
    </ligand>
</feature>
<feature type="binding site" evidence="1">
    <location>
        <position position="128"/>
    </location>
    <ligand>
        <name>dCTP</name>
        <dbReference type="ChEBI" id="CHEBI:61481"/>
    </ligand>
</feature>
<feature type="binding site" evidence="1">
    <location>
        <begin position="136"/>
        <end position="138"/>
    </location>
    <ligand>
        <name>dCTP</name>
        <dbReference type="ChEBI" id="CHEBI:61481"/>
    </ligand>
</feature>
<feature type="binding site" evidence="1">
    <location>
        <position position="171"/>
    </location>
    <ligand>
        <name>dCTP</name>
        <dbReference type="ChEBI" id="CHEBI:61481"/>
    </ligand>
</feature>
<feature type="binding site" evidence="1">
    <location>
        <position position="178"/>
    </location>
    <ligand>
        <name>dCTP</name>
        <dbReference type="ChEBI" id="CHEBI:61481"/>
    </ligand>
</feature>
<feature type="binding site" evidence="1">
    <location>
        <position position="182"/>
    </location>
    <ligand>
        <name>dCTP</name>
        <dbReference type="ChEBI" id="CHEBI:61481"/>
    </ligand>
</feature>
<organism>
    <name type="scientific">Shewanella sp. (strain MR-4)</name>
    <dbReference type="NCBI Taxonomy" id="60480"/>
    <lineage>
        <taxon>Bacteria</taxon>
        <taxon>Pseudomonadati</taxon>
        <taxon>Pseudomonadota</taxon>
        <taxon>Gammaproteobacteria</taxon>
        <taxon>Alteromonadales</taxon>
        <taxon>Shewanellaceae</taxon>
        <taxon>Shewanella</taxon>
    </lineage>
</organism>